<name>CH10_LISMF</name>
<organism>
    <name type="scientific">Listeria monocytogenes serotype 4b (strain F2365)</name>
    <dbReference type="NCBI Taxonomy" id="265669"/>
    <lineage>
        <taxon>Bacteria</taxon>
        <taxon>Bacillati</taxon>
        <taxon>Bacillota</taxon>
        <taxon>Bacilli</taxon>
        <taxon>Bacillales</taxon>
        <taxon>Listeriaceae</taxon>
        <taxon>Listeria</taxon>
    </lineage>
</organism>
<dbReference type="EMBL" id="AE017262">
    <property type="protein sequence ID" value="AAT04870.1"/>
    <property type="molecule type" value="Genomic_DNA"/>
</dbReference>
<dbReference type="RefSeq" id="WP_003726504.1">
    <property type="nucleotide sequence ID" value="NC_002973.6"/>
</dbReference>
<dbReference type="SMR" id="Q71XU5"/>
<dbReference type="GeneID" id="93235513"/>
<dbReference type="KEGG" id="lmf:LMOf2365_2100"/>
<dbReference type="HOGENOM" id="CLU_132825_2_0_9"/>
<dbReference type="GO" id="GO:0005737">
    <property type="term" value="C:cytoplasm"/>
    <property type="evidence" value="ECO:0007669"/>
    <property type="project" value="UniProtKB-SubCell"/>
</dbReference>
<dbReference type="GO" id="GO:0005524">
    <property type="term" value="F:ATP binding"/>
    <property type="evidence" value="ECO:0007669"/>
    <property type="project" value="InterPro"/>
</dbReference>
<dbReference type="GO" id="GO:0046872">
    <property type="term" value="F:metal ion binding"/>
    <property type="evidence" value="ECO:0007669"/>
    <property type="project" value="TreeGrafter"/>
</dbReference>
<dbReference type="GO" id="GO:0044183">
    <property type="term" value="F:protein folding chaperone"/>
    <property type="evidence" value="ECO:0007669"/>
    <property type="project" value="InterPro"/>
</dbReference>
<dbReference type="GO" id="GO:0051087">
    <property type="term" value="F:protein-folding chaperone binding"/>
    <property type="evidence" value="ECO:0007669"/>
    <property type="project" value="TreeGrafter"/>
</dbReference>
<dbReference type="GO" id="GO:0051082">
    <property type="term" value="F:unfolded protein binding"/>
    <property type="evidence" value="ECO:0007669"/>
    <property type="project" value="TreeGrafter"/>
</dbReference>
<dbReference type="GO" id="GO:0051085">
    <property type="term" value="P:chaperone cofactor-dependent protein refolding"/>
    <property type="evidence" value="ECO:0007669"/>
    <property type="project" value="TreeGrafter"/>
</dbReference>
<dbReference type="CDD" id="cd00320">
    <property type="entry name" value="cpn10"/>
    <property type="match status" value="1"/>
</dbReference>
<dbReference type="FunFam" id="2.30.33.40:FF:000001">
    <property type="entry name" value="10 kDa chaperonin"/>
    <property type="match status" value="1"/>
</dbReference>
<dbReference type="Gene3D" id="2.30.33.40">
    <property type="entry name" value="GroES chaperonin"/>
    <property type="match status" value="1"/>
</dbReference>
<dbReference type="HAMAP" id="MF_00580">
    <property type="entry name" value="CH10"/>
    <property type="match status" value="1"/>
</dbReference>
<dbReference type="InterPro" id="IPR020818">
    <property type="entry name" value="Chaperonin_GroES"/>
</dbReference>
<dbReference type="InterPro" id="IPR037124">
    <property type="entry name" value="Chaperonin_GroES_sf"/>
</dbReference>
<dbReference type="InterPro" id="IPR018369">
    <property type="entry name" value="Chaprnonin_Cpn10_CS"/>
</dbReference>
<dbReference type="InterPro" id="IPR011032">
    <property type="entry name" value="GroES-like_sf"/>
</dbReference>
<dbReference type="NCBIfam" id="NF001530">
    <property type="entry name" value="PRK00364.1-6"/>
    <property type="match status" value="1"/>
</dbReference>
<dbReference type="NCBIfam" id="NF001531">
    <property type="entry name" value="PRK00364.2-2"/>
    <property type="match status" value="1"/>
</dbReference>
<dbReference type="NCBIfam" id="NF001533">
    <property type="entry name" value="PRK00364.2-4"/>
    <property type="match status" value="1"/>
</dbReference>
<dbReference type="NCBIfam" id="NF001534">
    <property type="entry name" value="PRK00364.2-5"/>
    <property type="match status" value="1"/>
</dbReference>
<dbReference type="PANTHER" id="PTHR10772">
    <property type="entry name" value="10 KDA HEAT SHOCK PROTEIN"/>
    <property type="match status" value="1"/>
</dbReference>
<dbReference type="PANTHER" id="PTHR10772:SF58">
    <property type="entry name" value="CO-CHAPERONIN GROES"/>
    <property type="match status" value="1"/>
</dbReference>
<dbReference type="Pfam" id="PF00166">
    <property type="entry name" value="Cpn10"/>
    <property type="match status" value="1"/>
</dbReference>
<dbReference type="PRINTS" id="PR00297">
    <property type="entry name" value="CHAPERONIN10"/>
</dbReference>
<dbReference type="SMART" id="SM00883">
    <property type="entry name" value="Cpn10"/>
    <property type="match status" value="1"/>
</dbReference>
<dbReference type="SUPFAM" id="SSF50129">
    <property type="entry name" value="GroES-like"/>
    <property type="match status" value="1"/>
</dbReference>
<dbReference type="PROSITE" id="PS00681">
    <property type="entry name" value="CHAPERONINS_CPN10"/>
    <property type="match status" value="1"/>
</dbReference>
<gene>
    <name evidence="1" type="primary">groES</name>
    <name evidence="1" type="synonym">groS</name>
    <name type="ordered locus">LMOf2365_2100</name>
</gene>
<keyword id="KW-0143">Chaperone</keyword>
<keyword id="KW-0963">Cytoplasm</keyword>
<proteinExistence type="inferred from homology"/>
<feature type="chain" id="PRO_0000174781" description="Co-chaperonin GroES">
    <location>
        <begin position="1"/>
        <end position="94"/>
    </location>
</feature>
<comment type="function">
    <text evidence="1">Together with the chaperonin GroEL, plays an essential role in assisting protein folding. The GroEL-GroES system forms a nano-cage that allows encapsulation of the non-native substrate proteins and provides a physical environment optimized to promote and accelerate protein folding. GroES binds to the apical surface of the GroEL ring, thereby capping the opening of the GroEL channel.</text>
</comment>
<comment type="subunit">
    <text evidence="1">Heptamer of 7 subunits arranged in a ring. Interacts with the chaperonin GroEL.</text>
</comment>
<comment type="subcellular location">
    <subcellularLocation>
        <location evidence="1">Cytoplasm</location>
    </subcellularLocation>
</comment>
<comment type="similarity">
    <text evidence="1">Belongs to the GroES chaperonin family.</text>
</comment>
<evidence type="ECO:0000255" key="1">
    <source>
        <dbReference type="HAMAP-Rule" id="MF_00580"/>
    </source>
</evidence>
<reference key="1">
    <citation type="journal article" date="2004" name="Nucleic Acids Res.">
        <title>Whole genome comparisons of serotype 4b and 1/2a strains of the food-borne pathogen Listeria monocytogenes reveal new insights into the core genome components of this species.</title>
        <authorList>
            <person name="Nelson K.E."/>
            <person name="Fouts D.E."/>
            <person name="Mongodin E.F."/>
            <person name="Ravel J."/>
            <person name="DeBoy R.T."/>
            <person name="Kolonay J.F."/>
            <person name="Rasko D.A."/>
            <person name="Angiuoli S.V."/>
            <person name="Gill S.R."/>
            <person name="Paulsen I.T."/>
            <person name="Peterson J.D."/>
            <person name="White O."/>
            <person name="Nelson W.C."/>
            <person name="Nierman W.C."/>
            <person name="Beanan M.J."/>
            <person name="Brinkac L.M."/>
            <person name="Daugherty S.C."/>
            <person name="Dodson R.J."/>
            <person name="Durkin A.S."/>
            <person name="Madupu R."/>
            <person name="Haft D.H."/>
            <person name="Selengut J."/>
            <person name="Van Aken S.E."/>
            <person name="Khouri H.M."/>
            <person name="Fedorova N."/>
            <person name="Forberger H.A."/>
            <person name="Tran B."/>
            <person name="Kathariou S."/>
            <person name="Wonderling L.D."/>
            <person name="Uhlich G.A."/>
            <person name="Bayles D.O."/>
            <person name="Luchansky J.B."/>
            <person name="Fraser C.M."/>
        </authorList>
    </citation>
    <scope>NUCLEOTIDE SEQUENCE [LARGE SCALE GENOMIC DNA]</scope>
    <source>
        <strain>F2365</strain>
    </source>
</reference>
<protein>
    <recommendedName>
        <fullName evidence="1">Co-chaperonin GroES</fullName>
    </recommendedName>
    <alternativeName>
        <fullName evidence="1">10 kDa chaperonin</fullName>
    </alternativeName>
    <alternativeName>
        <fullName evidence="1">Chaperonin-10</fullName>
        <shortName evidence="1">Cpn10</shortName>
    </alternativeName>
</protein>
<accession>Q71XU5</accession>
<sequence>MLKPLGDRVVIEVLEAEEKTASGIVLPDSAKEKPQSGKIVAVGSGRVLDNGTKEPLEVAEGDTVIFAKYSGTEVTYEGTDYLILRESDILAITK</sequence>